<evidence type="ECO:0000250" key="1"/>
<evidence type="ECO:0000255" key="2">
    <source>
        <dbReference type="PROSITE-ProRule" id="PRU00108"/>
    </source>
</evidence>
<evidence type="ECO:0000256" key="3">
    <source>
        <dbReference type="SAM" id="MobiDB-lite"/>
    </source>
</evidence>
<evidence type="ECO:0000305" key="4"/>
<name>HESX1_RABIT</name>
<comment type="function">
    <text>Required for the normal development of the forebrain, eyes and other anterior structures such as the olfactory placodes and pituitary gland. Possible transcriptional repressor. Binds to the palindromic PIII sequence, 5'-AGCTTGAGTCTAATTGAATTAACTGTAC-3'.</text>
</comment>
<comment type="subunit">
    <text evidence="1">Interacts with TLE1.</text>
</comment>
<comment type="subcellular location">
    <subcellularLocation>
        <location evidence="2">Nucleus</location>
    </subcellularLocation>
</comment>
<comment type="similarity">
    <text evidence="4">Belongs to the ANF homeobox family.</text>
</comment>
<feature type="chain" id="PRO_0000048924" description="Homeobox expressed in ES cells 1">
    <location>
        <begin position="1"/>
        <end position="175" status="greater than"/>
    </location>
</feature>
<feature type="DNA-binding region" description="Homeobox" evidence="2">
    <location>
        <begin position="108"/>
        <end position="167"/>
    </location>
</feature>
<feature type="region of interest" description="Disordered" evidence="3">
    <location>
        <begin position="1"/>
        <end position="44"/>
    </location>
</feature>
<feature type="non-terminal residue">
    <location>
        <position position="175"/>
    </location>
</feature>
<reference key="1">
    <citation type="submission" date="1998-10" db="EMBL/GenBank/DDBJ databases">
        <authorList>
            <person name="Mitchell S.A."/>
            <person name="Viebahn C."/>
            <person name="Blum M."/>
        </authorList>
    </citation>
    <scope>NUCLEOTIDE SEQUENCE [MRNA]</scope>
    <source>
        <strain>New Zealand white</strain>
    </source>
</reference>
<protein>
    <recommendedName>
        <fullName>Homeobox expressed in ES cells 1</fullName>
    </recommendedName>
    <alternativeName>
        <fullName>Homeobox protein ANF</fullName>
    </alternativeName>
</protein>
<proteinExistence type="evidence at transcript level"/>
<keyword id="KW-0217">Developmental protein</keyword>
<keyword id="KW-0238">DNA-binding</keyword>
<keyword id="KW-0371">Homeobox</keyword>
<keyword id="KW-0539">Nucleus</keyword>
<keyword id="KW-1185">Reference proteome</keyword>
<keyword id="KW-0804">Transcription</keyword>
<keyword id="KW-0805">Transcription regulation</keyword>
<sequence>MSPNLQEGARLVEGKPSSTSFSIESILGLDQKKDDAPSMKPHRPWADTCSSLGKDANLRLHVPSFPNGISFPHPGDHPMPEERAMKYENYFSASERASLKRELNWYRGRRPRTAFTQNQVEVLENVFRVNCYPGIDIREDLARKLNLEEDRIQIWFQNRRAKLKRSHRESQFLMA</sequence>
<organism>
    <name type="scientific">Oryctolagus cuniculus</name>
    <name type="common">Rabbit</name>
    <dbReference type="NCBI Taxonomy" id="9986"/>
    <lineage>
        <taxon>Eukaryota</taxon>
        <taxon>Metazoa</taxon>
        <taxon>Chordata</taxon>
        <taxon>Craniata</taxon>
        <taxon>Vertebrata</taxon>
        <taxon>Euteleostomi</taxon>
        <taxon>Mammalia</taxon>
        <taxon>Eutheria</taxon>
        <taxon>Euarchontoglires</taxon>
        <taxon>Glires</taxon>
        <taxon>Lagomorpha</taxon>
        <taxon>Leporidae</taxon>
        <taxon>Oryctolagus</taxon>
    </lineage>
</organism>
<dbReference type="EMBL" id="AF102132">
    <property type="protein sequence ID" value="AAD11791.1"/>
    <property type="molecule type" value="mRNA"/>
</dbReference>
<dbReference type="SMR" id="O97670"/>
<dbReference type="FunCoup" id="O97670">
    <property type="interactions" value="563"/>
</dbReference>
<dbReference type="STRING" id="9986.ENSOCUP00000005167"/>
<dbReference type="PaxDb" id="9986-ENSOCUP00000005167"/>
<dbReference type="eggNOG" id="KOG0490">
    <property type="taxonomic scope" value="Eukaryota"/>
</dbReference>
<dbReference type="InParanoid" id="O97670"/>
<dbReference type="Proteomes" id="UP000001811">
    <property type="component" value="Unplaced"/>
</dbReference>
<dbReference type="GO" id="GO:0005634">
    <property type="term" value="C:nucleus"/>
    <property type="evidence" value="ECO:0000250"/>
    <property type="project" value="UniProtKB"/>
</dbReference>
<dbReference type="GO" id="GO:0003677">
    <property type="term" value="F:DNA binding"/>
    <property type="evidence" value="ECO:0000250"/>
    <property type="project" value="UniProtKB"/>
</dbReference>
<dbReference type="GO" id="GO:0001227">
    <property type="term" value="F:DNA-binding transcription repressor activity, RNA polymerase II-specific"/>
    <property type="evidence" value="ECO:0007669"/>
    <property type="project" value="TreeGrafter"/>
</dbReference>
<dbReference type="GO" id="GO:0000978">
    <property type="term" value="F:RNA polymerase II cis-regulatory region sequence-specific DNA binding"/>
    <property type="evidence" value="ECO:0000250"/>
    <property type="project" value="UniProtKB"/>
</dbReference>
<dbReference type="GO" id="GO:0021983">
    <property type="term" value="P:pituitary gland development"/>
    <property type="evidence" value="ECO:0000250"/>
    <property type="project" value="UniProtKB"/>
</dbReference>
<dbReference type="CDD" id="cd00086">
    <property type="entry name" value="homeodomain"/>
    <property type="match status" value="1"/>
</dbReference>
<dbReference type="FunFam" id="1.10.10.60:FF:000214">
    <property type="entry name" value="Homeobox expressed in ES cells 1"/>
    <property type="match status" value="1"/>
</dbReference>
<dbReference type="Gene3D" id="1.10.10.60">
    <property type="entry name" value="Homeodomain-like"/>
    <property type="match status" value="1"/>
</dbReference>
<dbReference type="InterPro" id="IPR001356">
    <property type="entry name" value="HD"/>
</dbReference>
<dbReference type="InterPro" id="IPR043402">
    <property type="entry name" value="Hesx1"/>
</dbReference>
<dbReference type="InterPro" id="IPR017970">
    <property type="entry name" value="Homeobox_CS"/>
</dbReference>
<dbReference type="InterPro" id="IPR009057">
    <property type="entry name" value="Homeodomain-like_sf"/>
</dbReference>
<dbReference type="PANTHER" id="PTHR46966">
    <property type="entry name" value="HOMEOBOX EXPRESSED IN ES CELLS 1"/>
    <property type="match status" value="1"/>
</dbReference>
<dbReference type="PANTHER" id="PTHR46966:SF1">
    <property type="entry name" value="HOMEOBOX EXPRESSED IN ES CELLS 1"/>
    <property type="match status" value="1"/>
</dbReference>
<dbReference type="Pfam" id="PF00046">
    <property type="entry name" value="Homeodomain"/>
    <property type="match status" value="1"/>
</dbReference>
<dbReference type="SMART" id="SM00389">
    <property type="entry name" value="HOX"/>
    <property type="match status" value="1"/>
</dbReference>
<dbReference type="SUPFAM" id="SSF46689">
    <property type="entry name" value="Homeodomain-like"/>
    <property type="match status" value="1"/>
</dbReference>
<dbReference type="PROSITE" id="PS00027">
    <property type="entry name" value="HOMEOBOX_1"/>
    <property type="match status" value="1"/>
</dbReference>
<dbReference type="PROSITE" id="PS50071">
    <property type="entry name" value="HOMEOBOX_2"/>
    <property type="match status" value="1"/>
</dbReference>
<accession>O97670</accession>
<gene>
    <name type="primary">HESX1</name>
    <name type="synonym">ANF</name>
</gene>